<comment type="function">
    <text evidence="1">Catalyzes the isomerization of L-xylulose-5-phosphate to L-ribulose-5-phosphate. Is involved in the anaerobic L-ascorbate utilization.</text>
</comment>
<comment type="catalytic activity">
    <reaction evidence="1">
        <text>L-ribulose 5-phosphate = L-xylulose 5-phosphate</text>
        <dbReference type="Rhea" id="RHEA:18497"/>
        <dbReference type="ChEBI" id="CHEBI:57829"/>
        <dbReference type="ChEBI" id="CHEBI:58226"/>
        <dbReference type="EC" id="5.1.3.22"/>
    </reaction>
</comment>
<comment type="pathway">
    <text evidence="1">Cofactor degradation; L-ascorbate degradation; D-xylulose 5-phosphate from L-ascorbate: step 3/4.</text>
</comment>
<comment type="induction">
    <text evidence="1">Induced by L-ascorbate. Repressed by UlaR.</text>
</comment>
<comment type="similarity">
    <text evidence="1">Belongs to the L-ribulose-5-phosphate 3-epimerase family.</text>
</comment>
<accession>B2TY69</accession>
<feature type="chain" id="PRO_1000188839" description="L-ribulose-5-phosphate 3-epimerase UlaE">
    <location>
        <begin position="1"/>
        <end position="284"/>
    </location>
</feature>
<proteinExistence type="inferred from homology"/>
<keyword id="KW-0413">Isomerase</keyword>
<keyword id="KW-1185">Reference proteome</keyword>
<dbReference type="EC" id="5.1.3.22" evidence="1"/>
<dbReference type="EMBL" id="CP001063">
    <property type="protein sequence ID" value="ACD06496.1"/>
    <property type="molecule type" value="Genomic_DNA"/>
</dbReference>
<dbReference type="RefSeq" id="WP_000949538.1">
    <property type="nucleotide sequence ID" value="NC_010658.1"/>
</dbReference>
<dbReference type="SMR" id="B2TY69"/>
<dbReference type="STRING" id="344609.SbBS512_E4727"/>
<dbReference type="KEGG" id="sbc:SbBS512_E4727"/>
<dbReference type="HOGENOM" id="CLU_082738_0_0_6"/>
<dbReference type="UniPathway" id="UPA00263">
    <property type="reaction ID" value="UER00379"/>
</dbReference>
<dbReference type="Proteomes" id="UP000001030">
    <property type="component" value="Chromosome"/>
</dbReference>
<dbReference type="GO" id="GO:0016861">
    <property type="term" value="F:intramolecular oxidoreductase activity, interconverting aldoses and ketoses"/>
    <property type="evidence" value="ECO:0007669"/>
    <property type="project" value="InterPro"/>
</dbReference>
<dbReference type="GO" id="GO:0034015">
    <property type="term" value="F:L-ribulose-5-phosphate 3-epimerase activity"/>
    <property type="evidence" value="ECO:0007669"/>
    <property type="project" value="UniProtKB-UniRule"/>
</dbReference>
<dbReference type="GO" id="GO:0019854">
    <property type="term" value="P:L-ascorbic acid catabolic process"/>
    <property type="evidence" value="ECO:0007669"/>
    <property type="project" value="UniProtKB-UniRule"/>
</dbReference>
<dbReference type="FunFam" id="3.20.20.150:FF:000003">
    <property type="entry name" value="L-ribulose-5-phosphate 3-epimerase UlaE"/>
    <property type="match status" value="1"/>
</dbReference>
<dbReference type="Gene3D" id="3.20.20.150">
    <property type="entry name" value="Divalent-metal-dependent TIM barrel enzymes"/>
    <property type="match status" value="1"/>
</dbReference>
<dbReference type="HAMAP" id="MF_01951">
    <property type="entry name" value="UlaE"/>
    <property type="match status" value="1"/>
</dbReference>
<dbReference type="InterPro" id="IPR004560">
    <property type="entry name" value="L-Ru-5P_3-Epase"/>
</dbReference>
<dbReference type="InterPro" id="IPR023492">
    <property type="entry name" value="L-Ru-5P_3-Epase_Enterobacteria"/>
</dbReference>
<dbReference type="InterPro" id="IPR050417">
    <property type="entry name" value="Sugar_Epim/Isomerase"/>
</dbReference>
<dbReference type="InterPro" id="IPR036237">
    <property type="entry name" value="Xyl_isomerase-like_sf"/>
</dbReference>
<dbReference type="InterPro" id="IPR013022">
    <property type="entry name" value="Xyl_isomerase-like_TIM-brl"/>
</dbReference>
<dbReference type="NCBIfam" id="TIGR00542">
    <property type="entry name" value="hxl6Piso_put"/>
    <property type="match status" value="1"/>
</dbReference>
<dbReference type="NCBIfam" id="NF009688">
    <property type="entry name" value="PRK13209.1"/>
    <property type="match status" value="1"/>
</dbReference>
<dbReference type="NCBIfam" id="NF009689">
    <property type="entry name" value="PRK13210.1"/>
    <property type="match status" value="1"/>
</dbReference>
<dbReference type="PANTHER" id="PTHR43489">
    <property type="entry name" value="ISOMERASE"/>
    <property type="match status" value="1"/>
</dbReference>
<dbReference type="PANTHER" id="PTHR43489:SF8">
    <property type="entry name" value="L-RIBULOSE-5-PHOSPHATE 3-EPIMERASE ULAE"/>
    <property type="match status" value="1"/>
</dbReference>
<dbReference type="Pfam" id="PF01261">
    <property type="entry name" value="AP_endonuc_2"/>
    <property type="match status" value="1"/>
</dbReference>
<dbReference type="SUPFAM" id="SSF51658">
    <property type="entry name" value="Xylose isomerase-like"/>
    <property type="match status" value="1"/>
</dbReference>
<reference key="1">
    <citation type="submission" date="2008-05" db="EMBL/GenBank/DDBJ databases">
        <title>Complete sequence of Shigella boydii serotype 18 strain BS512.</title>
        <authorList>
            <person name="Rasko D.A."/>
            <person name="Rosovitz M."/>
            <person name="Maurelli A.T."/>
            <person name="Myers G."/>
            <person name="Seshadri R."/>
            <person name="Cer R."/>
            <person name="Jiang L."/>
            <person name="Ravel J."/>
            <person name="Sebastian Y."/>
        </authorList>
    </citation>
    <scope>NUCLEOTIDE SEQUENCE [LARGE SCALE GENOMIC DNA]</scope>
    <source>
        <strain>CDC 3083-94 / BS512</strain>
    </source>
</reference>
<gene>
    <name evidence="1" type="primary">ulaE</name>
    <name type="ordered locus">SbBS512_E4727</name>
</gene>
<protein>
    <recommendedName>
        <fullName evidence="1">L-ribulose-5-phosphate 3-epimerase UlaE</fullName>
        <ecNumber evidence="1">5.1.3.22</ecNumber>
    </recommendedName>
    <alternativeName>
        <fullName evidence="1">L-ascorbate utilization protein E</fullName>
    </alternativeName>
    <alternativeName>
        <fullName evidence="1">L-xylulose-5-phosphate 3-epimerase</fullName>
    </alternativeName>
</protein>
<organism>
    <name type="scientific">Shigella boydii serotype 18 (strain CDC 3083-94 / BS512)</name>
    <dbReference type="NCBI Taxonomy" id="344609"/>
    <lineage>
        <taxon>Bacteria</taxon>
        <taxon>Pseudomonadati</taxon>
        <taxon>Pseudomonadota</taxon>
        <taxon>Gammaproteobacteria</taxon>
        <taxon>Enterobacterales</taxon>
        <taxon>Enterobacteriaceae</taxon>
        <taxon>Shigella</taxon>
    </lineage>
</organism>
<evidence type="ECO:0000255" key="1">
    <source>
        <dbReference type="HAMAP-Rule" id="MF_01951"/>
    </source>
</evidence>
<sequence length="284" mass="32086">MLSKQIPLGIYEKALPAGECWLERLRLAKTLGFDFVEMSVDETDERLSRLDWSREQRLALVNAIVETGVRVPSMCLSAHRRFPLGSEDDAVRAQGLEIMRKAIQFAQDVGIRVIQLAGYDVYYQEANNETRRHFRDGLKESVEMASRAQVTLAMEIMDYPLMNSISKALGYAHYLNNPWFQLYPDIGNLSAWDNDVQMELQAGIGHIVAVHVKDTKPGVFKNVPFGEGVVDFERCFETLKQSGYCGPYLIEMWSETAEDPAAEVVKARDWVKARMAKAGMVEAA</sequence>
<name>ULAE_SHIB3</name>